<comment type="catalytic activity">
    <reaction evidence="1">
        <text>2-formamido-N(1)-(5-O-phospho-beta-D-ribosyl)acetamidine + ATP = 5-amino-1-(5-phospho-beta-D-ribosyl)imidazole + ADP + phosphate + H(+)</text>
        <dbReference type="Rhea" id="RHEA:23032"/>
        <dbReference type="ChEBI" id="CHEBI:15378"/>
        <dbReference type="ChEBI" id="CHEBI:30616"/>
        <dbReference type="ChEBI" id="CHEBI:43474"/>
        <dbReference type="ChEBI" id="CHEBI:137981"/>
        <dbReference type="ChEBI" id="CHEBI:147287"/>
        <dbReference type="ChEBI" id="CHEBI:456216"/>
        <dbReference type="EC" id="6.3.3.1"/>
    </reaction>
</comment>
<comment type="pathway">
    <text evidence="1">Purine metabolism; IMP biosynthesis via de novo pathway; 5-amino-1-(5-phospho-D-ribosyl)imidazole from N(2)-formyl-N(1)-(5-phospho-D-ribosyl)glycinamide: step 2/2.</text>
</comment>
<comment type="subcellular location">
    <subcellularLocation>
        <location evidence="1">Cytoplasm</location>
    </subcellularLocation>
</comment>
<comment type="similarity">
    <text evidence="1">Belongs to the AIR synthase family.</text>
</comment>
<sequence>MDYQDAGVNIEAGRSFVDKIRRSVESTYNAQVLGGLGGFGGYFELPTGYENPVLVSGTDGVGTKLKIAQALNRHQTIGIDLVAMCVNDILTSGAKPLFFLDYLATGKLNPQQLSDVVTGIVEGCHLSDCALLGGETAEMPGFYGVGEYDVAGFCVGVVEKANLLDGSQINIGDVAIGLSSSGVHSNGFSLVRKIVEVNGLSWGDRFESLGNQTLGEVLLTPTQIYVKPILEALKSGIEIKGMAHITGGGLPENLPRCLNNNQSIKINSESWSILPIFQWIANMGNVATAAMFDTFNMGIGFVIIVPKNQGKTSIEWLKSQGISAYEIGEVIEGNRELVGL</sequence>
<keyword id="KW-0067">ATP-binding</keyword>
<keyword id="KW-0963">Cytoplasm</keyword>
<keyword id="KW-0436">Ligase</keyword>
<keyword id="KW-0547">Nucleotide-binding</keyword>
<keyword id="KW-0658">Purine biosynthesis</keyword>
<keyword id="KW-1185">Reference proteome</keyword>
<name>PUR5_CROS5</name>
<dbReference type="EC" id="6.3.3.1" evidence="1"/>
<dbReference type="EMBL" id="CP000806">
    <property type="protein sequence ID" value="ACB53305.1"/>
    <property type="molecule type" value="Genomic_DNA"/>
</dbReference>
<dbReference type="RefSeq" id="WP_009547211.1">
    <property type="nucleotide sequence ID" value="NC_010546.1"/>
</dbReference>
<dbReference type="SMR" id="B1WPZ0"/>
<dbReference type="STRING" id="43989.cce_3957"/>
<dbReference type="KEGG" id="cyt:cce_3957"/>
<dbReference type="eggNOG" id="COG0150">
    <property type="taxonomic scope" value="Bacteria"/>
</dbReference>
<dbReference type="HOGENOM" id="CLU_047116_0_0_3"/>
<dbReference type="OrthoDB" id="9802507at2"/>
<dbReference type="UniPathway" id="UPA00074">
    <property type="reaction ID" value="UER00129"/>
</dbReference>
<dbReference type="Proteomes" id="UP000001203">
    <property type="component" value="Chromosome circular"/>
</dbReference>
<dbReference type="GO" id="GO:0005829">
    <property type="term" value="C:cytosol"/>
    <property type="evidence" value="ECO:0007669"/>
    <property type="project" value="TreeGrafter"/>
</dbReference>
<dbReference type="GO" id="GO:0005524">
    <property type="term" value="F:ATP binding"/>
    <property type="evidence" value="ECO:0007669"/>
    <property type="project" value="UniProtKB-KW"/>
</dbReference>
<dbReference type="GO" id="GO:0004637">
    <property type="term" value="F:phosphoribosylamine-glycine ligase activity"/>
    <property type="evidence" value="ECO:0007669"/>
    <property type="project" value="TreeGrafter"/>
</dbReference>
<dbReference type="GO" id="GO:0004641">
    <property type="term" value="F:phosphoribosylformylglycinamidine cyclo-ligase activity"/>
    <property type="evidence" value="ECO:0007669"/>
    <property type="project" value="UniProtKB-UniRule"/>
</dbReference>
<dbReference type="GO" id="GO:0006189">
    <property type="term" value="P:'de novo' IMP biosynthetic process"/>
    <property type="evidence" value="ECO:0007669"/>
    <property type="project" value="UniProtKB-UniRule"/>
</dbReference>
<dbReference type="GO" id="GO:0046084">
    <property type="term" value="P:adenine biosynthetic process"/>
    <property type="evidence" value="ECO:0007669"/>
    <property type="project" value="TreeGrafter"/>
</dbReference>
<dbReference type="CDD" id="cd02196">
    <property type="entry name" value="PurM"/>
    <property type="match status" value="1"/>
</dbReference>
<dbReference type="FunFam" id="3.30.1330.10:FF:000001">
    <property type="entry name" value="Phosphoribosylformylglycinamidine cyclo-ligase"/>
    <property type="match status" value="1"/>
</dbReference>
<dbReference type="FunFam" id="3.90.650.10:FF:000011">
    <property type="entry name" value="Phosphoribosylformylglycinamidine cyclo-ligase"/>
    <property type="match status" value="1"/>
</dbReference>
<dbReference type="Gene3D" id="3.90.650.10">
    <property type="entry name" value="PurM-like C-terminal domain"/>
    <property type="match status" value="1"/>
</dbReference>
<dbReference type="Gene3D" id="3.30.1330.10">
    <property type="entry name" value="PurM-like, N-terminal domain"/>
    <property type="match status" value="1"/>
</dbReference>
<dbReference type="HAMAP" id="MF_00741">
    <property type="entry name" value="AIRS"/>
    <property type="match status" value="1"/>
</dbReference>
<dbReference type="InterPro" id="IPR010918">
    <property type="entry name" value="PurM-like_C_dom"/>
</dbReference>
<dbReference type="InterPro" id="IPR036676">
    <property type="entry name" value="PurM-like_C_sf"/>
</dbReference>
<dbReference type="InterPro" id="IPR016188">
    <property type="entry name" value="PurM-like_N"/>
</dbReference>
<dbReference type="InterPro" id="IPR036921">
    <property type="entry name" value="PurM-like_N_sf"/>
</dbReference>
<dbReference type="InterPro" id="IPR004733">
    <property type="entry name" value="PurM_cligase"/>
</dbReference>
<dbReference type="NCBIfam" id="TIGR00878">
    <property type="entry name" value="purM"/>
    <property type="match status" value="1"/>
</dbReference>
<dbReference type="PANTHER" id="PTHR10520:SF12">
    <property type="entry name" value="TRIFUNCTIONAL PURINE BIOSYNTHETIC PROTEIN ADENOSINE-3"/>
    <property type="match status" value="1"/>
</dbReference>
<dbReference type="PANTHER" id="PTHR10520">
    <property type="entry name" value="TRIFUNCTIONAL PURINE BIOSYNTHETIC PROTEIN ADENOSINE-3-RELATED"/>
    <property type="match status" value="1"/>
</dbReference>
<dbReference type="Pfam" id="PF00586">
    <property type="entry name" value="AIRS"/>
    <property type="match status" value="1"/>
</dbReference>
<dbReference type="Pfam" id="PF02769">
    <property type="entry name" value="AIRS_C"/>
    <property type="match status" value="1"/>
</dbReference>
<dbReference type="SUPFAM" id="SSF56042">
    <property type="entry name" value="PurM C-terminal domain-like"/>
    <property type="match status" value="1"/>
</dbReference>
<dbReference type="SUPFAM" id="SSF55326">
    <property type="entry name" value="PurM N-terminal domain-like"/>
    <property type="match status" value="1"/>
</dbReference>
<gene>
    <name evidence="1" type="primary">purM</name>
    <name type="ordered locus">cce_3957</name>
</gene>
<reference key="1">
    <citation type="journal article" date="2008" name="Proc. Natl. Acad. Sci. U.S.A.">
        <title>The genome of Cyanothece 51142, a unicellular diazotrophic cyanobacterium important in the marine nitrogen cycle.</title>
        <authorList>
            <person name="Welsh E.A."/>
            <person name="Liberton M."/>
            <person name="Stoeckel J."/>
            <person name="Loh T."/>
            <person name="Elvitigala T."/>
            <person name="Wang C."/>
            <person name="Wollam A."/>
            <person name="Fulton R.S."/>
            <person name="Clifton S.W."/>
            <person name="Jacobs J.M."/>
            <person name="Aurora R."/>
            <person name="Ghosh B.K."/>
            <person name="Sherman L.A."/>
            <person name="Smith R.D."/>
            <person name="Wilson R.K."/>
            <person name="Pakrasi H.B."/>
        </authorList>
    </citation>
    <scope>NUCLEOTIDE SEQUENCE [LARGE SCALE GENOMIC DNA]</scope>
    <source>
        <strain>ATCC 51142 / BH68</strain>
    </source>
</reference>
<accession>B1WPZ0</accession>
<protein>
    <recommendedName>
        <fullName evidence="1">Phosphoribosylformylglycinamidine cyclo-ligase</fullName>
        <ecNumber evidence="1">6.3.3.1</ecNumber>
    </recommendedName>
    <alternativeName>
        <fullName evidence="1">AIR synthase</fullName>
    </alternativeName>
    <alternativeName>
        <fullName evidence="1">AIRS</fullName>
    </alternativeName>
    <alternativeName>
        <fullName evidence="1">Phosphoribosyl-aminoimidazole synthetase</fullName>
    </alternativeName>
</protein>
<organism>
    <name type="scientific">Crocosphaera subtropica (strain ATCC 51142 / BH68)</name>
    <name type="common">Cyanothece sp. (strain ATCC 51142)</name>
    <dbReference type="NCBI Taxonomy" id="43989"/>
    <lineage>
        <taxon>Bacteria</taxon>
        <taxon>Bacillati</taxon>
        <taxon>Cyanobacteriota</taxon>
        <taxon>Cyanophyceae</taxon>
        <taxon>Oscillatoriophycideae</taxon>
        <taxon>Chroococcales</taxon>
        <taxon>Aphanothecaceae</taxon>
        <taxon>Crocosphaera</taxon>
        <taxon>Crocosphaera subtropica</taxon>
    </lineage>
</organism>
<proteinExistence type="inferred from homology"/>
<evidence type="ECO:0000255" key="1">
    <source>
        <dbReference type="HAMAP-Rule" id="MF_00741"/>
    </source>
</evidence>
<feature type="chain" id="PRO_1000148275" description="Phosphoribosylformylglycinamidine cyclo-ligase">
    <location>
        <begin position="1"/>
        <end position="340"/>
    </location>
</feature>